<proteinExistence type="inferred from homology"/>
<gene>
    <name evidence="1" type="primary">luxS</name>
    <name type="ordered locus">LSEI_0765</name>
</gene>
<dbReference type="EC" id="4.4.1.21" evidence="1"/>
<dbReference type="EMBL" id="CP000423">
    <property type="protein sequence ID" value="ABJ69601.1"/>
    <property type="molecule type" value="Genomic_DNA"/>
</dbReference>
<dbReference type="RefSeq" id="WP_003563944.1">
    <property type="nucleotide sequence ID" value="NC_008526.1"/>
</dbReference>
<dbReference type="RefSeq" id="YP_806043.1">
    <property type="nucleotide sequence ID" value="NC_008526.1"/>
</dbReference>
<dbReference type="SMR" id="Q03B21"/>
<dbReference type="STRING" id="321967.LSEI_0765"/>
<dbReference type="PaxDb" id="321967-LSEI_0765"/>
<dbReference type="KEGG" id="lca:LSEI_0765"/>
<dbReference type="PATRIC" id="fig|321967.11.peg.767"/>
<dbReference type="HOGENOM" id="CLU_107531_2_1_9"/>
<dbReference type="Proteomes" id="UP000001651">
    <property type="component" value="Chromosome"/>
</dbReference>
<dbReference type="GO" id="GO:0005506">
    <property type="term" value="F:iron ion binding"/>
    <property type="evidence" value="ECO:0007669"/>
    <property type="project" value="InterPro"/>
</dbReference>
<dbReference type="GO" id="GO:0043768">
    <property type="term" value="F:S-ribosylhomocysteine lyase activity"/>
    <property type="evidence" value="ECO:0007669"/>
    <property type="project" value="UniProtKB-UniRule"/>
</dbReference>
<dbReference type="GO" id="GO:0009372">
    <property type="term" value="P:quorum sensing"/>
    <property type="evidence" value="ECO:0007669"/>
    <property type="project" value="UniProtKB-UniRule"/>
</dbReference>
<dbReference type="Gene3D" id="3.30.1360.80">
    <property type="entry name" value="S-ribosylhomocysteinase (LuxS)"/>
    <property type="match status" value="1"/>
</dbReference>
<dbReference type="HAMAP" id="MF_00091">
    <property type="entry name" value="LuxS"/>
    <property type="match status" value="1"/>
</dbReference>
<dbReference type="InterPro" id="IPR037005">
    <property type="entry name" value="LuxS_sf"/>
</dbReference>
<dbReference type="InterPro" id="IPR011249">
    <property type="entry name" value="Metalloenz_LuxS/M16"/>
</dbReference>
<dbReference type="InterPro" id="IPR003815">
    <property type="entry name" value="S-ribosylhomocysteinase"/>
</dbReference>
<dbReference type="NCBIfam" id="NF002606">
    <property type="entry name" value="PRK02260.2-4"/>
    <property type="match status" value="1"/>
</dbReference>
<dbReference type="NCBIfam" id="NF002608">
    <property type="entry name" value="PRK02260.3-1"/>
    <property type="match status" value="1"/>
</dbReference>
<dbReference type="NCBIfam" id="NF002610">
    <property type="entry name" value="PRK02260.3-3"/>
    <property type="match status" value="1"/>
</dbReference>
<dbReference type="PANTHER" id="PTHR35799">
    <property type="entry name" value="S-RIBOSYLHOMOCYSTEINE LYASE"/>
    <property type="match status" value="1"/>
</dbReference>
<dbReference type="PANTHER" id="PTHR35799:SF1">
    <property type="entry name" value="S-RIBOSYLHOMOCYSTEINE LYASE"/>
    <property type="match status" value="1"/>
</dbReference>
<dbReference type="Pfam" id="PF02664">
    <property type="entry name" value="LuxS"/>
    <property type="match status" value="1"/>
</dbReference>
<dbReference type="PIRSF" id="PIRSF006160">
    <property type="entry name" value="AI2"/>
    <property type="match status" value="1"/>
</dbReference>
<dbReference type="PRINTS" id="PR01487">
    <property type="entry name" value="LUXSPROTEIN"/>
</dbReference>
<dbReference type="SUPFAM" id="SSF63411">
    <property type="entry name" value="LuxS/MPP-like metallohydrolase"/>
    <property type="match status" value="1"/>
</dbReference>
<comment type="function">
    <text evidence="1">Involved in the synthesis of autoinducer 2 (AI-2) which is secreted by bacteria and is used to communicate both the cell density and the metabolic potential of the environment. The regulation of gene expression in response to changes in cell density is called quorum sensing. Catalyzes the transformation of S-ribosylhomocysteine (RHC) to homocysteine (HC) and 4,5-dihydroxy-2,3-pentadione (DPD).</text>
</comment>
<comment type="catalytic activity">
    <reaction evidence="1">
        <text>S-(5-deoxy-D-ribos-5-yl)-L-homocysteine = (S)-4,5-dihydroxypentane-2,3-dione + L-homocysteine</text>
        <dbReference type="Rhea" id="RHEA:17753"/>
        <dbReference type="ChEBI" id="CHEBI:29484"/>
        <dbReference type="ChEBI" id="CHEBI:58195"/>
        <dbReference type="ChEBI" id="CHEBI:58199"/>
        <dbReference type="EC" id="4.4.1.21"/>
    </reaction>
</comment>
<comment type="cofactor">
    <cofactor evidence="1">
        <name>Fe cation</name>
        <dbReference type="ChEBI" id="CHEBI:24875"/>
    </cofactor>
    <text evidence="1">Binds 1 Fe cation per subunit.</text>
</comment>
<comment type="subunit">
    <text evidence="1">Homodimer.</text>
</comment>
<comment type="similarity">
    <text evidence="1">Belongs to the LuxS family.</text>
</comment>
<accession>Q03B21</accession>
<protein>
    <recommendedName>
        <fullName evidence="1">S-ribosylhomocysteine lyase</fullName>
        <ecNumber evidence="1">4.4.1.21</ecNumber>
    </recommendedName>
    <alternativeName>
        <fullName evidence="1">AI-2 synthesis protein</fullName>
    </alternativeName>
    <alternativeName>
        <fullName evidence="1">Autoinducer-2 production protein LuxS</fullName>
    </alternativeName>
</protein>
<keyword id="KW-0071">Autoinducer synthesis</keyword>
<keyword id="KW-0408">Iron</keyword>
<keyword id="KW-0456">Lyase</keyword>
<keyword id="KW-0479">Metal-binding</keyword>
<keyword id="KW-0673">Quorum sensing</keyword>
<keyword id="KW-1185">Reference proteome</keyword>
<sequence>MAKVESFTLDHTAVKAPYVRLITTEHGAKGDVISNYDLRLVQPNTAAIDTAGLHTIEHLLASLLRDRMDGVIDCSPFGCRTGFHLITWGEHSTTEVAKALKSSLEAIANDITWDDVPGVDIKSCGNYKDHSLFSAKEWAKLILSRGISNDPYTRQVV</sequence>
<feature type="chain" id="PRO_0000298005" description="S-ribosylhomocysteine lyase">
    <location>
        <begin position="1"/>
        <end position="157"/>
    </location>
</feature>
<feature type="binding site" evidence="1">
    <location>
        <position position="54"/>
    </location>
    <ligand>
        <name>Fe cation</name>
        <dbReference type="ChEBI" id="CHEBI:24875"/>
    </ligand>
</feature>
<feature type="binding site" evidence="1">
    <location>
        <position position="58"/>
    </location>
    <ligand>
        <name>Fe cation</name>
        <dbReference type="ChEBI" id="CHEBI:24875"/>
    </ligand>
</feature>
<feature type="binding site" evidence="1">
    <location>
        <position position="124"/>
    </location>
    <ligand>
        <name>Fe cation</name>
        <dbReference type="ChEBI" id="CHEBI:24875"/>
    </ligand>
</feature>
<evidence type="ECO:0000255" key="1">
    <source>
        <dbReference type="HAMAP-Rule" id="MF_00091"/>
    </source>
</evidence>
<organism>
    <name type="scientific">Lacticaseibacillus paracasei (strain ATCC 334 / BCRC 17002 / CCUG 31169 / CIP 107868 / KCTC 3260 / NRRL B-441)</name>
    <name type="common">Lactobacillus paracasei</name>
    <dbReference type="NCBI Taxonomy" id="321967"/>
    <lineage>
        <taxon>Bacteria</taxon>
        <taxon>Bacillati</taxon>
        <taxon>Bacillota</taxon>
        <taxon>Bacilli</taxon>
        <taxon>Lactobacillales</taxon>
        <taxon>Lactobacillaceae</taxon>
        <taxon>Lacticaseibacillus</taxon>
    </lineage>
</organism>
<name>LUXS_LACP3</name>
<reference key="1">
    <citation type="journal article" date="2006" name="Proc. Natl. Acad. Sci. U.S.A.">
        <title>Comparative genomics of the lactic acid bacteria.</title>
        <authorList>
            <person name="Makarova K.S."/>
            <person name="Slesarev A."/>
            <person name="Wolf Y.I."/>
            <person name="Sorokin A."/>
            <person name="Mirkin B."/>
            <person name="Koonin E.V."/>
            <person name="Pavlov A."/>
            <person name="Pavlova N."/>
            <person name="Karamychev V."/>
            <person name="Polouchine N."/>
            <person name="Shakhova V."/>
            <person name="Grigoriev I."/>
            <person name="Lou Y."/>
            <person name="Rohksar D."/>
            <person name="Lucas S."/>
            <person name="Huang K."/>
            <person name="Goodstein D.M."/>
            <person name="Hawkins T."/>
            <person name="Plengvidhya V."/>
            <person name="Welker D."/>
            <person name="Hughes J."/>
            <person name="Goh Y."/>
            <person name="Benson A."/>
            <person name="Baldwin K."/>
            <person name="Lee J.-H."/>
            <person name="Diaz-Muniz I."/>
            <person name="Dosti B."/>
            <person name="Smeianov V."/>
            <person name="Wechter W."/>
            <person name="Barabote R."/>
            <person name="Lorca G."/>
            <person name="Altermann E."/>
            <person name="Barrangou R."/>
            <person name="Ganesan B."/>
            <person name="Xie Y."/>
            <person name="Rawsthorne H."/>
            <person name="Tamir D."/>
            <person name="Parker C."/>
            <person name="Breidt F."/>
            <person name="Broadbent J.R."/>
            <person name="Hutkins R."/>
            <person name="O'Sullivan D."/>
            <person name="Steele J."/>
            <person name="Unlu G."/>
            <person name="Saier M.H. Jr."/>
            <person name="Klaenhammer T."/>
            <person name="Richardson P."/>
            <person name="Kozyavkin S."/>
            <person name="Weimer B.C."/>
            <person name="Mills D.A."/>
        </authorList>
    </citation>
    <scope>NUCLEOTIDE SEQUENCE [LARGE SCALE GENOMIC DNA]</scope>
    <source>
        <strain>ATCC 334 / BCRC 17002 / CCUG 31169 / CIP 107868 / KCTC 3260 / NRRL B-441</strain>
    </source>
</reference>